<feature type="chain" id="PRO_1000195801" description="Large ribosomal subunit protein bL12">
    <location>
        <begin position="1"/>
        <end position="128"/>
    </location>
</feature>
<feature type="region of interest" description="Disordered" evidence="2">
    <location>
        <begin position="97"/>
        <end position="128"/>
    </location>
</feature>
<feature type="compositionally biased region" description="Basic and acidic residues" evidence="2">
    <location>
        <begin position="105"/>
        <end position="118"/>
    </location>
</feature>
<keyword id="KW-1185">Reference proteome</keyword>
<keyword id="KW-0687">Ribonucleoprotein</keyword>
<keyword id="KW-0689">Ribosomal protein</keyword>
<sequence>MSVTKEQVIEFISNMTVLELSQFIKELEEKFGVSAAAPAVGMMMAAPTAASAEAEAEEKTEFDVILKEAGANKIAVIKVVRALTGLGLKEAKDKVDGAPSTLKEGVSKEDAEEAKKQLTEAGATVEVK</sequence>
<evidence type="ECO:0000255" key="1">
    <source>
        <dbReference type="HAMAP-Rule" id="MF_00368"/>
    </source>
</evidence>
<evidence type="ECO:0000256" key="2">
    <source>
        <dbReference type="SAM" id="MobiDB-lite"/>
    </source>
</evidence>
<evidence type="ECO:0000305" key="3"/>
<gene>
    <name evidence="1" type="primary">rplL</name>
    <name type="ordered locus">LI0930</name>
</gene>
<proteinExistence type="inferred from homology"/>
<comment type="function">
    <text evidence="1">Forms part of the ribosomal stalk which helps the ribosome interact with GTP-bound translation factors. Is thus essential for accurate translation.</text>
</comment>
<comment type="subunit">
    <text evidence="1">Homodimer. Part of the ribosomal stalk of the 50S ribosomal subunit. Forms a multimeric L10(L12)X complex, where L10 forms an elongated spine to which 2 to 4 L12 dimers bind in a sequential fashion. Binds GTP-bound translation factors.</text>
</comment>
<comment type="similarity">
    <text evidence="1">Belongs to the bacterial ribosomal protein bL12 family.</text>
</comment>
<protein>
    <recommendedName>
        <fullName evidence="1">Large ribosomal subunit protein bL12</fullName>
    </recommendedName>
    <alternativeName>
        <fullName evidence="3">50S ribosomal protein L7/L12</fullName>
    </alternativeName>
</protein>
<accession>Q1MPU3</accession>
<organism>
    <name type="scientific">Lawsonia intracellularis (strain PHE/MN1-00)</name>
    <dbReference type="NCBI Taxonomy" id="363253"/>
    <lineage>
        <taxon>Bacteria</taxon>
        <taxon>Pseudomonadati</taxon>
        <taxon>Thermodesulfobacteriota</taxon>
        <taxon>Desulfovibrionia</taxon>
        <taxon>Desulfovibrionales</taxon>
        <taxon>Desulfovibrionaceae</taxon>
        <taxon>Lawsonia</taxon>
    </lineage>
</organism>
<reference key="1">
    <citation type="submission" date="2005-11" db="EMBL/GenBank/DDBJ databases">
        <title>The complete genome sequence of Lawsonia intracellularis: the causative agent of proliferative enteropathy.</title>
        <authorList>
            <person name="Kaur K."/>
            <person name="Zhang Q."/>
            <person name="Beckler D."/>
            <person name="Munir S."/>
            <person name="Li L."/>
            <person name="Kinsley K."/>
            <person name="Herron L."/>
            <person name="Peterson A."/>
            <person name="May B."/>
            <person name="Singh S."/>
            <person name="Gebhart C."/>
            <person name="Kapur V."/>
        </authorList>
    </citation>
    <scope>NUCLEOTIDE SEQUENCE [LARGE SCALE GENOMIC DNA]</scope>
    <source>
        <strain>PHE/MN1-00</strain>
    </source>
</reference>
<name>RL7_LAWIP</name>
<dbReference type="EMBL" id="AM180252">
    <property type="protein sequence ID" value="CAJ54984.1"/>
    <property type="molecule type" value="Genomic_DNA"/>
</dbReference>
<dbReference type="RefSeq" id="WP_011527013.1">
    <property type="nucleotide sequence ID" value="NC_008011.1"/>
</dbReference>
<dbReference type="SMR" id="Q1MPU3"/>
<dbReference type="STRING" id="363253.LI0930"/>
<dbReference type="KEGG" id="lip:LI0930"/>
<dbReference type="eggNOG" id="COG0222">
    <property type="taxonomic scope" value="Bacteria"/>
</dbReference>
<dbReference type="HOGENOM" id="CLU_086499_3_0_7"/>
<dbReference type="OrthoDB" id="9811748at2"/>
<dbReference type="Proteomes" id="UP000002430">
    <property type="component" value="Chromosome"/>
</dbReference>
<dbReference type="GO" id="GO:0022625">
    <property type="term" value="C:cytosolic large ribosomal subunit"/>
    <property type="evidence" value="ECO:0007669"/>
    <property type="project" value="TreeGrafter"/>
</dbReference>
<dbReference type="GO" id="GO:0003729">
    <property type="term" value="F:mRNA binding"/>
    <property type="evidence" value="ECO:0007669"/>
    <property type="project" value="TreeGrafter"/>
</dbReference>
<dbReference type="GO" id="GO:0003735">
    <property type="term" value="F:structural constituent of ribosome"/>
    <property type="evidence" value="ECO:0007669"/>
    <property type="project" value="InterPro"/>
</dbReference>
<dbReference type="GO" id="GO:0006412">
    <property type="term" value="P:translation"/>
    <property type="evidence" value="ECO:0007669"/>
    <property type="project" value="UniProtKB-UniRule"/>
</dbReference>
<dbReference type="CDD" id="cd00387">
    <property type="entry name" value="Ribosomal_L7_L12"/>
    <property type="match status" value="1"/>
</dbReference>
<dbReference type="FunFam" id="3.30.1390.10:FF:000001">
    <property type="entry name" value="50S ribosomal protein L7/L12"/>
    <property type="match status" value="1"/>
</dbReference>
<dbReference type="Gene3D" id="3.30.1390.10">
    <property type="match status" value="1"/>
</dbReference>
<dbReference type="Gene3D" id="1.20.5.710">
    <property type="entry name" value="Single helix bin"/>
    <property type="match status" value="1"/>
</dbReference>
<dbReference type="HAMAP" id="MF_00368">
    <property type="entry name" value="Ribosomal_bL12"/>
    <property type="match status" value="1"/>
</dbReference>
<dbReference type="InterPro" id="IPR000206">
    <property type="entry name" value="Ribosomal_bL12"/>
</dbReference>
<dbReference type="InterPro" id="IPR013823">
    <property type="entry name" value="Ribosomal_bL12_C"/>
</dbReference>
<dbReference type="InterPro" id="IPR014719">
    <property type="entry name" value="Ribosomal_bL12_C/ClpS-like"/>
</dbReference>
<dbReference type="InterPro" id="IPR008932">
    <property type="entry name" value="Ribosomal_bL12_oligo"/>
</dbReference>
<dbReference type="InterPro" id="IPR036235">
    <property type="entry name" value="Ribosomal_bL12_oligo_N_sf"/>
</dbReference>
<dbReference type="NCBIfam" id="TIGR00855">
    <property type="entry name" value="L12"/>
    <property type="match status" value="1"/>
</dbReference>
<dbReference type="PANTHER" id="PTHR45987">
    <property type="entry name" value="39S RIBOSOMAL PROTEIN L12"/>
    <property type="match status" value="1"/>
</dbReference>
<dbReference type="PANTHER" id="PTHR45987:SF4">
    <property type="entry name" value="LARGE RIBOSOMAL SUBUNIT PROTEIN BL12M"/>
    <property type="match status" value="1"/>
</dbReference>
<dbReference type="Pfam" id="PF00542">
    <property type="entry name" value="Ribosomal_L12"/>
    <property type="match status" value="1"/>
</dbReference>
<dbReference type="Pfam" id="PF16320">
    <property type="entry name" value="Ribosomal_L12_N"/>
    <property type="match status" value="1"/>
</dbReference>
<dbReference type="SUPFAM" id="SSF54736">
    <property type="entry name" value="ClpS-like"/>
    <property type="match status" value="1"/>
</dbReference>
<dbReference type="SUPFAM" id="SSF48300">
    <property type="entry name" value="Ribosomal protein L7/12, oligomerisation (N-terminal) domain"/>
    <property type="match status" value="1"/>
</dbReference>